<dbReference type="EC" id="2.7.4.22" evidence="1"/>
<dbReference type="EMBL" id="CP000769">
    <property type="protein sequence ID" value="ABS24520.1"/>
    <property type="molecule type" value="Genomic_DNA"/>
</dbReference>
<dbReference type="RefSeq" id="WP_011984626.1">
    <property type="nucleotide sequence ID" value="NC_009675.1"/>
</dbReference>
<dbReference type="SMR" id="A7H724"/>
<dbReference type="STRING" id="404589.Anae109_0304"/>
<dbReference type="KEGG" id="afw:Anae109_0304"/>
<dbReference type="eggNOG" id="COG0528">
    <property type="taxonomic scope" value="Bacteria"/>
</dbReference>
<dbReference type="HOGENOM" id="CLU_033861_0_0_7"/>
<dbReference type="OrthoDB" id="9807458at2"/>
<dbReference type="UniPathway" id="UPA00159">
    <property type="reaction ID" value="UER00275"/>
</dbReference>
<dbReference type="Proteomes" id="UP000006382">
    <property type="component" value="Chromosome"/>
</dbReference>
<dbReference type="GO" id="GO:0005737">
    <property type="term" value="C:cytoplasm"/>
    <property type="evidence" value="ECO:0007669"/>
    <property type="project" value="UniProtKB-SubCell"/>
</dbReference>
<dbReference type="GO" id="GO:0005524">
    <property type="term" value="F:ATP binding"/>
    <property type="evidence" value="ECO:0007669"/>
    <property type="project" value="UniProtKB-KW"/>
</dbReference>
<dbReference type="GO" id="GO:0033862">
    <property type="term" value="F:UMP kinase activity"/>
    <property type="evidence" value="ECO:0007669"/>
    <property type="project" value="UniProtKB-EC"/>
</dbReference>
<dbReference type="GO" id="GO:0044210">
    <property type="term" value="P:'de novo' CTP biosynthetic process"/>
    <property type="evidence" value="ECO:0007669"/>
    <property type="project" value="UniProtKB-UniRule"/>
</dbReference>
<dbReference type="GO" id="GO:0006225">
    <property type="term" value="P:UDP biosynthetic process"/>
    <property type="evidence" value="ECO:0007669"/>
    <property type="project" value="TreeGrafter"/>
</dbReference>
<dbReference type="CDD" id="cd04254">
    <property type="entry name" value="AAK_UMPK-PyrH-Ec"/>
    <property type="match status" value="1"/>
</dbReference>
<dbReference type="FunFam" id="3.40.1160.10:FF:000001">
    <property type="entry name" value="Uridylate kinase"/>
    <property type="match status" value="1"/>
</dbReference>
<dbReference type="Gene3D" id="3.40.1160.10">
    <property type="entry name" value="Acetylglutamate kinase-like"/>
    <property type="match status" value="1"/>
</dbReference>
<dbReference type="HAMAP" id="MF_01220_B">
    <property type="entry name" value="PyrH_B"/>
    <property type="match status" value="1"/>
</dbReference>
<dbReference type="InterPro" id="IPR036393">
    <property type="entry name" value="AceGlu_kinase-like_sf"/>
</dbReference>
<dbReference type="InterPro" id="IPR001048">
    <property type="entry name" value="Asp/Glu/Uridylate_kinase"/>
</dbReference>
<dbReference type="InterPro" id="IPR011817">
    <property type="entry name" value="Uridylate_kinase"/>
</dbReference>
<dbReference type="InterPro" id="IPR015963">
    <property type="entry name" value="Uridylate_kinase_bac"/>
</dbReference>
<dbReference type="NCBIfam" id="TIGR02075">
    <property type="entry name" value="pyrH_bact"/>
    <property type="match status" value="1"/>
</dbReference>
<dbReference type="PANTHER" id="PTHR42833">
    <property type="entry name" value="URIDYLATE KINASE"/>
    <property type="match status" value="1"/>
</dbReference>
<dbReference type="PANTHER" id="PTHR42833:SF4">
    <property type="entry name" value="URIDYLATE KINASE PUMPKIN, CHLOROPLASTIC"/>
    <property type="match status" value="1"/>
</dbReference>
<dbReference type="Pfam" id="PF00696">
    <property type="entry name" value="AA_kinase"/>
    <property type="match status" value="1"/>
</dbReference>
<dbReference type="PIRSF" id="PIRSF005650">
    <property type="entry name" value="Uridylate_kin"/>
    <property type="match status" value="1"/>
</dbReference>
<dbReference type="SUPFAM" id="SSF53633">
    <property type="entry name" value="Carbamate kinase-like"/>
    <property type="match status" value="1"/>
</dbReference>
<organism>
    <name type="scientific">Anaeromyxobacter sp. (strain Fw109-5)</name>
    <dbReference type="NCBI Taxonomy" id="404589"/>
    <lineage>
        <taxon>Bacteria</taxon>
        <taxon>Pseudomonadati</taxon>
        <taxon>Myxococcota</taxon>
        <taxon>Myxococcia</taxon>
        <taxon>Myxococcales</taxon>
        <taxon>Cystobacterineae</taxon>
        <taxon>Anaeromyxobacteraceae</taxon>
        <taxon>Anaeromyxobacter</taxon>
    </lineage>
</organism>
<name>PYRH_ANADF</name>
<gene>
    <name evidence="1" type="primary">pyrH</name>
    <name type="ordered locus">Anae109_0304</name>
</gene>
<sequence length="249" mass="26860">MPSDRAATPKPSYKRILLKLSGEALMGDGKYGISPKTLSAIAGDVKDCVDLGVEVALTIGGGNIFRGVSGATEGMDRSSADYMGMLATVINAMALQDALEKIGVNTRVQSAIEMHQVAEPYIRRRAIRHLEKGRVVIFAAGTGNPYFTTDTAASLRAMEIHADVLLKATKVDGVYTDDPKKNPAATKFKQLSYIDVLKKNLKVMDSTAISLCMDNDLPIIVFDSTLRGNVRRVVLGEQIGTTVGRLEEK</sequence>
<keyword id="KW-0067">ATP-binding</keyword>
<keyword id="KW-0963">Cytoplasm</keyword>
<keyword id="KW-0418">Kinase</keyword>
<keyword id="KW-0547">Nucleotide-binding</keyword>
<keyword id="KW-0665">Pyrimidine biosynthesis</keyword>
<keyword id="KW-1185">Reference proteome</keyword>
<keyword id="KW-0808">Transferase</keyword>
<evidence type="ECO:0000255" key="1">
    <source>
        <dbReference type="HAMAP-Rule" id="MF_01220"/>
    </source>
</evidence>
<comment type="function">
    <text evidence="1">Catalyzes the reversible phosphorylation of UMP to UDP.</text>
</comment>
<comment type="catalytic activity">
    <reaction evidence="1">
        <text>UMP + ATP = UDP + ADP</text>
        <dbReference type="Rhea" id="RHEA:24400"/>
        <dbReference type="ChEBI" id="CHEBI:30616"/>
        <dbReference type="ChEBI" id="CHEBI:57865"/>
        <dbReference type="ChEBI" id="CHEBI:58223"/>
        <dbReference type="ChEBI" id="CHEBI:456216"/>
        <dbReference type="EC" id="2.7.4.22"/>
    </reaction>
</comment>
<comment type="activity regulation">
    <text evidence="1">Inhibited by UTP.</text>
</comment>
<comment type="pathway">
    <text evidence="1">Pyrimidine metabolism; CTP biosynthesis via de novo pathway; UDP from UMP (UMPK route): step 1/1.</text>
</comment>
<comment type="subunit">
    <text evidence="1">Homohexamer.</text>
</comment>
<comment type="subcellular location">
    <subcellularLocation>
        <location evidence="1">Cytoplasm</location>
    </subcellularLocation>
</comment>
<comment type="similarity">
    <text evidence="1">Belongs to the UMP kinase family.</text>
</comment>
<accession>A7H724</accession>
<reference key="1">
    <citation type="journal article" date="2015" name="Genome Announc.">
        <title>Complete genome sequence of Anaeromyxobacter sp. Fw109-5, an anaerobic, metal-reducing bacterium isolated from a contaminated subsurface environment.</title>
        <authorList>
            <person name="Hwang C."/>
            <person name="Copeland A."/>
            <person name="Lucas S."/>
            <person name="Lapidus A."/>
            <person name="Barry K."/>
            <person name="Glavina Del Rio T."/>
            <person name="Dalin E."/>
            <person name="Tice H."/>
            <person name="Pitluck S."/>
            <person name="Sims D."/>
            <person name="Brettin T."/>
            <person name="Bruce D.C."/>
            <person name="Detter J.C."/>
            <person name="Han C.S."/>
            <person name="Schmutz J."/>
            <person name="Larimer F.W."/>
            <person name="Land M.L."/>
            <person name="Hauser L.J."/>
            <person name="Kyrpides N."/>
            <person name="Lykidis A."/>
            <person name="Richardson P."/>
            <person name="Belieav A."/>
            <person name="Sanford R.A."/>
            <person name="Loeffler F.E."/>
            <person name="Fields M.W."/>
        </authorList>
    </citation>
    <scope>NUCLEOTIDE SEQUENCE [LARGE SCALE GENOMIC DNA]</scope>
    <source>
        <strain>Fw109-5</strain>
    </source>
</reference>
<protein>
    <recommendedName>
        <fullName evidence="1">Uridylate kinase</fullName>
        <shortName evidence="1">UK</shortName>
        <ecNumber evidence="1">2.7.4.22</ecNumber>
    </recommendedName>
    <alternativeName>
        <fullName evidence="1">Uridine monophosphate kinase</fullName>
        <shortName evidence="1">UMP kinase</shortName>
        <shortName evidence="1">UMPK</shortName>
    </alternativeName>
</protein>
<proteinExistence type="inferred from homology"/>
<feature type="chain" id="PRO_0000323782" description="Uridylate kinase">
    <location>
        <begin position="1"/>
        <end position="249"/>
    </location>
</feature>
<feature type="binding site" evidence="1">
    <location>
        <begin position="19"/>
        <end position="22"/>
    </location>
    <ligand>
        <name>ATP</name>
        <dbReference type="ChEBI" id="CHEBI:30616"/>
    </ligand>
</feature>
<feature type="binding site" evidence="1">
    <location>
        <position position="61"/>
    </location>
    <ligand>
        <name>UMP</name>
        <dbReference type="ChEBI" id="CHEBI:57865"/>
    </ligand>
</feature>
<feature type="binding site" evidence="1">
    <location>
        <position position="62"/>
    </location>
    <ligand>
        <name>ATP</name>
        <dbReference type="ChEBI" id="CHEBI:30616"/>
    </ligand>
</feature>
<feature type="binding site" evidence="1">
    <location>
        <position position="66"/>
    </location>
    <ligand>
        <name>ATP</name>
        <dbReference type="ChEBI" id="CHEBI:30616"/>
    </ligand>
</feature>
<feature type="binding site" evidence="1">
    <location>
        <position position="81"/>
    </location>
    <ligand>
        <name>UMP</name>
        <dbReference type="ChEBI" id="CHEBI:57865"/>
    </ligand>
</feature>
<feature type="binding site" evidence="1">
    <location>
        <begin position="142"/>
        <end position="149"/>
    </location>
    <ligand>
        <name>UMP</name>
        <dbReference type="ChEBI" id="CHEBI:57865"/>
    </ligand>
</feature>
<feature type="binding site" evidence="1">
    <location>
        <position position="169"/>
    </location>
    <ligand>
        <name>ATP</name>
        <dbReference type="ChEBI" id="CHEBI:30616"/>
    </ligand>
</feature>
<feature type="binding site" evidence="1">
    <location>
        <position position="175"/>
    </location>
    <ligand>
        <name>ATP</name>
        <dbReference type="ChEBI" id="CHEBI:30616"/>
    </ligand>
</feature>
<feature type="binding site" evidence="1">
    <location>
        <position position="178"/>
    </location>
    <ligand>
        <name>ATP</name>
        <dbReference type="ChEBI" id="CHEBI:30616"/>
    </ligand>
</feature>